<protein>
    <recommendedName>
        <fullName evidence="1">Urease accessory protein UreF</fullName>
    </recommendedName>
</protein>
<accession>Q8DJ63</accession>
<feature type="chain" id="PRO_0000344196" description="Urease accessory protein UreF">
    <location>
        <begin position="1"/>
        <end position="225"/>
    </location>
</feature>
<gene>
    <name evidence="1" type="primary">ureF</name>
    <name type="ordered locus">tll1365</name>
</gene>
<dbReference type="EMBL" id="BA000039">
    <property type="protein sequence ID" value="BAC08917.1"/>
    <property type="molecule type" value="Genomic_DNA"/>
</dbReference>
<dbReference type="RefSeq" id="NP_682155.1">
    <property type="nucleotide sequence ID" value="NC_004113.1"/>
</dbReference>
<dbReference type="RefSeq" id="WP_011057205.1">
    <property type="nucleotide sequence ID" value="NC_004113.1"/>
</dbReference>
<dbReference type="SMR" id="Q8DJ63"/>
<dbReference type="STRING" id="197221.gene:10747963"/>
<dbReference type="EnsemblBacteria" id="BAC08917">
    <property type="protein sequence ID" value="BAC08917"/>
    <property type="gene ID" value="BAC08917"/>
</dbReference>
<dbReference type="KEGG" id="tel:tll1365"/>
<dbReference type="PATRIC" id="fig|197221.4.peg.1434"/>
<dbReference type="eggNOG" id="COG0830">
    <property type="taxonomic scope" value="Bacteria"/>
</dbReference>
<dbReference type="Proteomes" id="UP000000440">
    <property type="component" value="Chromosome"/>
</dbReference>
<dbReference type="GO" id="GO:0005737">
    <property type="term" value="C:cytoplasm"/>
    <property type="evidence" value="ECO:0007669"/>
    <property type="project" value="UniProtKB-SubCell"/>
</dbReference>
<dbReference type="GO" id="GO:0016151">
    <property type="term" value="F:nickel cation binding"/>
    <property type="evidence" value="ECO:0007669"/>
    <property type="project" value="UniProtKB-UniRule"/>
</dbReference>
<dbReference type="Gene3D" id="1.10.4190.10">
    <property type="entry name" value="Urease accessory protein UreF"/>
    <property type="match status" value="1"/>
</dbReference>
<dbReference type="HAMAP" id="MF_01385">
    <property type="entry name" value="UreF"/>
    <property type="match status" value="1"/>
</dbReference>
<dbReference type="InterPro" id="IPR002639">
    <property type="entry name" value="UreF"/>
</dbReference>
<dbReference type="InterPro" id="IPR038277">
    <property type="entry name" value="UreF_sf"/>
</dbReference>
<dbReference type="PANTHER" id="PTHR33620">
    <property type="entry name" value="UREASE ACCESSORY PROTEIN F"/>
    <property type="match status" value="1"/>
</dbReference>
<dbReference type="PANTHER" id="PTHR33620:SF1">
    <property type="entry name" value="UREASE ACCESSORY PROTEIN F"/>
    <property type="match status" value="1"/>
</dbReference>
<dbReference type="Pfam" id="PF01730">
    <property type="entry name" value="UreF"/>
    <property type="match status" value="1"/>
</dbReference>
<dbReference type="PIRSF" id="PIRSF009467">
    <property type="entry name" value="Ureas_acces_UreF"/>
    <property type="match status" value="1"/>
</dbReference>
<proteinExistence type="inferred from homology"/>
<name>UREF_THEVB</name>
<sequence length="225" mass="24564">MLTDSALLTLLQWVSPALPIGGFNYSEGLETLIAQGQITSAAALQDWLGFELAFGSAQWETAVMARVYRAIAKGDFEAVHQWNAWLSAARESAELRAQNWQMGTALINLVAALDRLPPALQTGQPYPWNVSVAFCIAANLADIPLETALLGYLHSWATTLINAAVKLIPLGQTAGQLLLRQLQPQIQQTVQQSLNVTDDNLESCTLGLALASMQHETLYCRLFRS</sequence>
<keyword id="KW-0143">Chaperone</keyword>
<keyword id="KW-0963">Cytoplasm</keyword>
<keyword id="KW-0996">Nickel insertion</keyword>
<keyword id="KW-1185">Reference proteome</keyword>
<comment type="function">
    <text evidence="1">Required for maturation of urease via the functional incorporation of the urease nickel metallocenter.</text>
</comment>
<comment type="subunit">
    <text evidence="1">UreD, UreF and UreG form a complex that acts as a GTP-hydrolysis-dependent molecular chaperone, activating the urease apoprotein by helping to assemble the nickel containing metallocenter of UreC. The UreE protein probably delivers the nickel.</text>
</comment>
<comment type="subcellular location">
    <subcellularLocation>
        <location evidence="1">Cytoplasm</location>
    </subcellularLocation>
</comment>
<comment type="similarity">
    <text evidence="1">Belongs to the UreF family.</text>
</comment>
<evidence type="ECO:0000255" key="1">
    <source>
        <dbReference type="HAMAP-Rule" id="MF_01385"/>
    </source>
</evidence>
<organism>
    <name type="scientific">Thermosynechococcus vestitus (strain NIES-2133 / IAM M-273 / BP-1)</name>
    <dbReference type="NCBI Taxonomy" id="197221"/>
    <lineage>
        <taxon>Bacteria</taxon>
        <taxon>Bacillati</taxon>
        <taxon>Cyanobacteriota</taxon>
        <taxon>Cyanophyceae</taxon>
        <taxon>Acaryochloridales</taxon>
        <taxon>Thermosynechococcaceae</taxon>
        <taxon>Thermosynechococcus</taxon>
    </lineage>
</organism>
<reference key="1">
    <citation type="journal article" date="2002" name="DNA Res.">
        <title>Complete genome structure of the thermophilic cyanobacterium Thermosynechococcus elongatus BP-1.</title>
        <authorList>
            <person name="Nakamura Y."/>
            <person name="Kaneko T."/>
            <person name="Sato S."/>
            <person name="Ikeuchi M."/>
            <person name="Katoh H."/>
            <person name="Sasamoto S."/>
            <person name="Watanabe A."/>
            <person name="Iriguchi M."/>
            <person name="Kawashima K."/>
            <person name="Kimura T."/>
            <person name="Kishida Y."/>
            <person name="Kiyokawa C."/>
            <person name="Kohara M."/>
            <person name="Matsumoto M."/>
            <person name="Matsuno A."/>
            <person name="Nakazaki N."/>
            <person name="Shimpo S."/>
            <person name="Sugimoto M."/>
            <person name="Takeuchi C."/>
            <person name="Yamada M."/>
            <person name="Tabata S."/>
        </authorList>
    </citation>
    <scope>NUCLEOTIDE SEQUENCE [LARGE SCALE GENOMIC DNA]</scope>
    <source>
        <strain>NIES-2133 / IAM M-273 / BP-1</strain>
    </source>
</reference>